<reference key="1">
    <citation type="journal article" date="1991" name="Proc. Natl. Acad. Sci. U.S.A.">
        <title>Prohormone processing in Xenopus oocytes: characterization of cleavage signals and cleavage enzymes.</title>
        <authorList>
            <person name="Korner J."/>
            <person name="Chun J."/>
            <person name="O'Bryan L."/>
            <person name="Axel R."/>
        </authorList>
    </citation>
    <scope>NUCLEOTIDE SEQUENCE [MRNA]</scope>
    <scope>TISSUE SPECIFICITY</scope>
</reference>
<comment type="function">
    <text evidence="1">Ubiquitous endoprotease within constitutive secretory pathways capable of cleavage at the RX(K/R)R consensus motif.</text>
</comment>
<comment type="catalytic activity">
    <reaction evidence="1">
        <text>Release of mature proteins from their proproteins by cleavage of -Arg-Xaa-Yaa-Arg-|-Zaa- bonds, where Xaa can be any amino acid and Yaa is Arg or Lys. Releases albumin, complement component C3 and von Willebrand factor from their respective precursors.</text>
        <dbReference type="EC" id="3.4.21.75"/>
    </reaction>
</comment>
<comment type="cofactor">
    <cofactor evidence="1">
        <name>Ca(2+)</name>
        <dbReference type="ChEBI" id="CHEBI:29108"/>
    </cofactor>
    <text evidence="1">Binds 3 calcium ions per subunit.</text>
</comment>
<comment type="activity regulation">
    <text evidence="1">Inhibited by the not secondly cleaved propeptide. Inhibited by m-guanidinomethyl-phenylacetyl-Arg-Val-Arg-(amidomethyl)-benzamidine (m-guanidinomethyl-Phac-RVR-Amb) and 4-guanidinomethyl-phenylacetyl-Arg-Tle-Arg-4-amidinobenzylamide (MI-1148).</text>
</comment>
<comment type="subcellular location">
    <subcellularLocation>
        <location evidence="1">Golgi apparatus</location>
        <location evidence="1">trans-Golgi network membrane</location>
        <topology evidence="9">Single-pass type I membrane protein</topology>
    </subcellularLocation>
    <subcellularLocation>
        <location evidence="1">Cell membrane</location>
        <topology evidence="9">Single-pass type I membrane protein</topology>
    </subcellularLocation>
    <subcellularLocation>
        <location evidence="2">Secreted</location>
    </subcellularLocation>
    <subcellularLocation>
        <location evidence="1">Endosome membrane</location>
        <topology evidence="9">Single-pass type I membrane protein</topology>
    </subcellularLocation>
    <text evidence="1">Shuttles between the trans-Golgi network and the cell surface. Propeptide cleavage is a prerequisite for exit of furin molecules out of the endoplasmic reticulum (ER). A second cleavage within the propeptide occurs in the trans Golgi network (TGN), followed by the release of the propeptide and the activation of furin.</text>
</comment>
<comment type="tissue specificity">
    <text evidence="8">In all tissues analyzed.</text>
</comment>
<comment type="similarity">
    <text evidence="9">Belongs to the peptidase S8 family. Furin subfamily.</text>
</comment>
<gene>
    <name type="primary">furin</name>
</gene>
<name>FURI1_XENLA</name>
<accession>P29119</accession>
<dbReference type="EC" id="3.4.21.75" evidence="1"/>
<dbReference type="EMBL" id="M80471">
    <property type="protein sequence ID" value="AAA49717.1"/>
    <property type="molecule type" value="mRNA"/>
</dbReference>
<dbReference type="PIR" id="A41627">
    <property type="entry name" value="A41627"/>
</dbReference>
<dbReference type="PIR" id="B41627">
    <property type="entry name" value="B41627"/>
</dbReference>
<dbReference type="SMR" id="P29119"/>
<dbReference type="MEROPS" id="S08.071"/>
<dbReference type="GlyCosmos" id="P29119">
    <property type="glycosylation" value="2 sites, No reported glycans"/>
</dbReference>
<dbReference type="AGR" id="Xenbase:XB-GENE-17342978"/>
<dbReference type="Xenbase" id="XB-GENE-17342978">
    <property type="gene designation" value="furin.S"/>
</dbReference>
<dbReference type="Proteomes" id="UP000186698">
    <property type="component" value="Unplaced"/>
</dbReference>
<dbReference type="GO" id="GO:0010008">
    <property type="term" value="C:endosome membrane"/>
    <property type="evidence" value="ECO:0007669"/>
    <property type="project" value="UniProtKB-SubCell"/>
</dbReference>
<dbReference type="GO" id="GO:0005576">
    <property type="term" value="C:extracellular region"/>
    <property type="evidence" value="ECO:0007669"/>
    <property type="project" value="UniProtKB-SubCell"/>
</dbReference>
<dbReference type="GO" id="GO:0000139">
    <property type="term" value="C:Golgi membrane"/>
    <property type="evidence" value="ECO:0000318"/>
    <property type="project" value="GO_Central"/>
</dbReference>
<dbReference type="GO" id="GO:0005886">
    <property type="term" value="C:plasma membrane"/>
    <property type="evidence" value="ECO:0007669"/>
    <property type="project" value="UniProtKB-SubCell"/>
</dbReference>
<dbReference type="GO" id="GO:0005802">
    <property type="term" value="C:trans-Golgi network"/>
    <property type="evidence" value="ECO:0000318"/>
    <property type="project" value="GO_Central"/>
</dbReference>
<dbReference type="GO" id="GO:0046872">
    <property type="term" value="F:metal ion binding"/>
    <property type="evidence" value="ECO:0007669"/>
    <property type="project" value="UniProtKB-KW"/>
</dbReference>
<dbReference type="GO" id="GO:0004252">
    <property type="term" value="F:serine-type endopeptidase activity"/>
    <property type="evidence" value="ECO:0000250"/>
    <property type="project" value="UniProtKB"/>
</dbReference>
<dbReference type="GO" id="GO:0140447">
    <property type="term" value="P:cytokine precursor processing"/>
    <property type="evidence" value="ECO:0000250"/>
    <property type="project" value="UniProtKB"/>
</dbReference>
<dbReference type="GO" id="GO:0016486">
    <property type="term" value="P:peptide hormone processing"/>
    <property type="evidence" value="ECO:0000318"/>
    <property type="project" value="GO_Central"/>
</dbReference>
<dbReference type="CDD" id="cd00064">
    <property type="entry name" value="FU"/>
    <property type="match status" value="1"/>
</dbReference>
<dbReference type="CDD" id="cd04059">
    <property type="entry name" value="Peptidases_S8_Protein_convertases_Kexins_Furin-like"/>
    <property type="match status" value="1"/>
</dbReference>
<dbReference type="FunFam" id="3.40.50.200:FF:000001">
    <property type="entry name" value="Furin 2, isoform B"/>
    <property type="match status" value="1"/>
</dbReference>
<dbReference type="FunFam" id="2.60.120.260:FF:000034">
    <property type="entry name" value="furin isoform X2"/>
    <property type="match status" value="1"/>
</dbReference>
<dbReference type="FunFam" id="3.30.70.850:FF:000001">
    <property type="entry name" value="Proprotein convertase subtilisin/kexin type 5"/>
    <property type="match status" value="1"/>
</dbReference>
<dbReference type="Gene3D" id="2.60.120.260">
    <property type="entry name" value="Galactose-binding domain-like"/>
    <property type="match status" value="1"/>
</dbReference>
<dbReference type="Gene3D" id="2.10.220.10">
    <property type="entry name" value="Hormone Receptor, Insulin-like Growth Factor Receptor 1, Chain A, domain 2"/>
    <property type="match status" value="1"/>
</dbReference>
<dbReference type="Gene3D" id="3.30.70.850">
    <property type="entry name" value="Peptidase S8, pro-domain"/>
    <property type="match status" value="1"/>
</dbReference>
<dbReference type="Gene3D" id="3.40.50.200">
    <property type="entry name" value="Peptidase S8/S53 domain"/>
    <property type="match status" value="1"/>
</dbReference>
<dbReference type="InterPro" id="IPR006212">
    <property type="entry name" value="Furin_repeat"/>
</dbReference>
<dbReference type="InterPro" id="IPR008979">
    <property type="entry name" value="Galactose-bd-like_sf"/>
</dbReference>
<dbReference type="InterPro" id="IPR009030">
    <property type="entry name" value="Growth_fac_rcpt_cys_sf"/>
</dbReference>
<dbReference type="InterPro" id="IPR034182">
    <property type="entry name" value="Kexin/furin"/>
</dbReference>
<dbReference type="InterPro" id="IPR002884">
    <property type="entry name" value="P_dom"/>
</dbReference>
<dbReference type="InterPro" id="IPR000209">
    <property type="entry name" value="Peptidase_S8/S53_dom"/>
</dbReference>
<dbReference type="InterPro" id="IPR036852">
    <property type="entry name" value="Peptidase_S8/S53_dom_sf"/>
</dbReference>
<dbReference type="InterPro" id="IPR023827">
    <property type="entry name" value="Peptidase_S8_Asp-AS"/>
</dbReference>
<dbReference type="InterPro" id="IPR022398">
    <property type="entry name" value="Peptidase_S8_His-AS"/>
</dbReference>
<dbReference type="InterPro" id="IPR023828">
    <property type="entry name" value="Peptidase_S8_Ser-AS"/>
</dbReference>
<dbReference type="InterPro" id="IPR015500">
    <property type="entry name" value="Peptidase_S8_subtilisin-rel"/>
</dbReference>
<dbReference type="InterPro" id="IPR032815">
    <property type="entry name" value="S8_pro-domain"/>
</dbReference>
<dbReference type="InterPro" id="IPR038466">
    <property type="entry name" value="S8_pro-domain_sf"/>
</dbReference>
<dbReference type="PANTHER" id="PTHR42884:SF1">
    <property type="entry name" value="FURIN"/>
    <property type="match status" value="1"/>
</dbReference>
<dbReference type="PANTHER" id="PTHR42884">
    <property type="entry name" value="PROPROTEIN CONVERTASE SUBTILISIN/KEXIN-RELATED"/>
    <property type="match status" value="1"/>
</dbReference>
<dbReference type="Pfam" id="PF01483">
    <property type="entry name" value="P_proprotein"/>
    <property type="match status" value="1"/>
</dbReference>
<dbReference type="Pfam" id="PF00082">
    <property type="entry name" value="Peptidase_S8"/>
    <property type="match status" value="1"/>
</dbReference>
<dbReference type="Pfam" id="PF16470">
    <property type="entry name" value="S8_pro-domain"/>
    <property type="match status" value="1"/>
</dbReference>
<dbReference type="PRINTS" id="PR00723">
    <property type="entry name" value="SUBTILISIN"/>
</dbReference>
<dbReference type="SMART" id="SM00261">
    <property type="entry name" value="FU"/>
    <property type="match status" value="2"/>
</dbReference>
<dbReference type="SUPFAM" id="SSF49785">
    <property type="entry name" value="Galactose-binding domain-like"/>
    <property type="match status" value="1"/>
</dbReference>
<dbReference type="SUPFAM" id="SSF57184">
    <property type="entry name" value="Growth factor receptor domain"/>
    <property type="match status" value="1"/>
</dbReference>
<dbReference type="SUPFAM" id="SSF54897">
    <property type="entry name" value="Protease propeptides/inhibitors"/>
    <property type="match status" value="1"/>
</dbReference>
<dbReference type="SUPFAM" id="SSF52743">
    <property type="entry name" value="Subtilisin-like"/>
    <property type="match status" value="1"/>
</dbReference>
<dbReference type="PROSITE" id="PS51829">
    <property type="entry name" value="P_HOMO_B"/>
    <property type="match status" value="1"/>
</dbReference>
<dbReference type="PROSITE" id="PS51892">
    <property type="entry name" value="SUBTILASE"/>
    <property type="match status" value="1"/>
</dbReference>
<dbReference type="PROSITE" id="PS00136">
    <property type="entry name" value="SUBTILASE_ASP"/>
    <property type="match status" value="1"/>
</dbReference>
<dbReference type="PROSITE" id="PS00137">
    <property type="entry name" value="SUBTILASE_HIS"/>
    <property type="match status" value="1"/>
</dbReference>
<dbReference type="PROSITE" id="PS00138">
    <property type="entry name" value="SUBTILASE_SER"/>
    <property type="match status" value="1"/>
</dbReference>
<protein>
    <recommendedName>
        <fullName>Furin-1</fullName>
        <ecNumber evidence="1">3.4.21.75</ecNumber>
    </recommendedName>
    <alternativeName>
        <fullName>Dibasic-processing enzyme</fullName>
    </alternativeName>
    <alternativeName>
        <fullName>Paired basic amino acid residue-cleaving enzyme</fullName>
        <shortName>PACE</shortName>
    </alternativeName>
</protein>
<feature type="signal peptide" evidence="3">
    <location>
        <begin position="1"/>
        <end position="24"/>
    </location>
</feature>
<feature type="propeptide" id="PRO_0000027034" evidence="3">
    <location>
        <begin position="25"/>
        <end position="105"/>
    </location>
</feature>
<feature type="chain" id="PRO_0000027035" description="Furin-1">
    <location>
        <begin position="106"/>
        <end position="783"/>
    </location>
</feature>
<feature type="topological domain" description="Lumenal" evidence="9">
    <location>
        <begin position="106"/>
        <end position="701"/>
    </location>
</feature>
<feature type="transmembrane region" description="Helical" evidence="3">
    <location>
        <begin position="702"/>
        <end position="722"/>
    </location>
</feature>
<feature type="topological domain" description="Cytoplasmic" evidence="9">
    <location>
        <begin position="723"/>
        <end position="783"/>
    </location>
</feature>
<feature type="domain" description="Peptidase S8" evidence="6">
    <location>
        <begin position="119"/>
        <end position="433"/>
    </location>
</feature>
<feature type="domain" description="P/Homo B" evidence="5">
    <location>
        <begin position="442"/>
        <end position="574"/>
    </location>
</feature>
<feature type="repeat" description="FU 1" evidence="3">
    <location>
        <begin position="585"/>
        <end position="618"/>
    </location>
</feature>
<feature type="repeat" description="FU 2" evidence="3">
    <location>
        <begin position="636"/>
        <end position="679"/>
    </location>
</feature>
<feature type="region of interest" description="Disordered" evidence="7">
    <location>
        <begin position="158"/>
        <end position="189"/>
    </location>
</feature>
<feature type="region of interest" description="Cell surface signal" evidence="1">
    <location>
        <begin position="746"/>
        <end position="749"/>
    </location>
</feature>
<feature type="region of interest" description="Disordered" evidence="7">
    <location>
        <begin position="760"/>
        <end position="783"/>
    </location>
</feature>
<feature type="short sequence motif" description="Cell attachment site" evidence="4">
    <location>
        <begin position="496"/>
        <end position="498"/>
    </location>
</feature>
<feature type="active site" description="Charge relay system" evidence="6">
    <location>
        <position position="151"/>
    </location>
</feature>
<feature type="active site" description="Charge relay system" evidence="6">
    <location>
        <position position="192"/>
    </location>
</feature>
<feature type="active site" description="Charge relay system" evidence="6">
    <location>
        <position position="366"/>
    </location>
</feature>
<feature type="binding site" evidence="1">
    <location>
        <position position="113"/>
    </location>
    <ligand>
        <name>Ca(2+)</name>
        <dbReference type="ChEBI" id="CHEBI:29108"/>
        <label>1</label>
    </ligand>
</feature>
<feature type="binding site" evidence="1">
    <location>
        <position position="152"/>
    </location>
    <ligand>
        <name>substrate</name>
    </ligand>
</feature>
<feature type="binding site" evidence="1">
    <location>
        <position position="160"/>
    </location>
    <ligand>
        <name>Ca(2+)</name>
        <dbReference type="ChEBI" id="CHEBI:29108"/>
        <label>1</label>
    </ligand>
</feature>
<feature type="binding site" evidence="1">
    <location>
        <position position="172"/>
    </location>
    <ligand>
        <name>Ca(2+)</name>
        <dbReference type="ChEBI" id="CHEBI:29108"/>
        <label>2</label>
    </ligand>
</feature>
<feature type="binding site" evidence="1">
    <location>
        <position position="177"/>
    </location>
    <ligand>
        <name>Ca(2+)</name>
        <dbReference type="ChEBI" id="CHEBI:29108"/>
        <label>2</label>
    </ligand>
</feature>
<feature type="binding site" evidence="1">
    <location>
        <position position="179"/>
    </location>
    <ligand>
        <name>Ca(2+)</name>
        <dbReference type="ChEBI" id="CHEBI:29108"/>
        <label>2</label>
    </ligand>
</feature>
<feature type="binding site" evidence="1">
    <location>
        <begin position="189"/>
        <end position="190"/>
    </location>
    <ligand>
        <name>substrate</name>
    </ligand>
</feature>
<feature type="binding site" evidence="1">
    <location>
        <position position="203"/>
    </location>
    <ligand>
        <name>Ca(2+)</name>
        <dbReference type="ChEBI" id="CHEBI:29108"/>
        <label>1</label>
    </ligand>
</feature>
<feature type="binding site" evidence="1">
    <location>
        <position position="206"/>
    </location>
    <ligand>
        <name>Ca(2+)</name>
        <dbReference type="ChEBI" id="CHEBI:29108"/>
        <label>1</label>
    </ligand>
</feature>
<feature type="binding site" evidence="1">
    <location>
        <position position="210"/>
    </location>
    <ligand>
        <name>Ca(2+)</name>
        <dbReference type="ChEBI" id="CHEBI:29108"/>
        <label>1</label>
    </ligand>
</feature>
<feature type="binding site" evidence="1">
    <location>
        <position position="234"/>
    </location>
    <ligand>
        <name>substrate</name>
    </ligand>
</feature>
<feature type="binding site" evidence="1">
    <location>
        <begin position="251"/>
        <end position="256"/>
    </location>
    <ligand>
        <name>substrate</name>
    </ligand>
</feature>
<feature type="binding site" evidence="1">
    <location>
        <position position="256"/>
    </location>
    <ligand>
        <name>Ca(2+)</name>
        <dbReference type="ChEBI" id="CHEBI:29108"/>
        <label>3</label>
    </ligand>
</feature>
<feature type="binding site" evidence="1">
    <location>
        <position position="262"/>
    </location>
    <ligand>
        <name>substrate</name>
    </ligand>
</feature>
<feature type="binding site" evidence="1">
    <location>
        <begin position="290"/>
        <end position="293"/>
    </location>
    <ligand>
        <name>substrate</name>
    </ligand>
</feature>
<feature type="binding site" evidence="1">
    <location>
        <position position="299"/>
    </location>
    <ligand>
        <name>Ca(2+)</name>
        <dbReference type="ChEBI" id="CHEBI:29108"/>
        <label>3</label>
    </ligand>
</feature>
<feature type="binding site" evidence="1">
    <location>
        <position position="304"/>
    </location>
    <ligand>
        <name>substrate</name>
    </ligand>
</feature>
<feature type="binding site" evidence="1">
    <location>
        <position position="306"/>
    </location>
    <ligand>
        <name>substrate</name>
    </ligand>
</feature>
<feature type="binding site" evidence="1">
    <location>
        <position position="329"/>
    </location>
    <ligand>
        <name>Ca(2+)</name>
        <dbReference type="ChEBI" id="CHEBI:29108"/>
        <label>3</label>
    </ligand>
</feature>
<feature type="binding site" evidence="1">
    <location>
        <position position="366"/>
    </location>
    <ligand>
        <name>substrate</name>
    </ligand>
</feature>
<feature type="site" description="Cleavage, second; by autolysis" evidence="1">
    <location>
        <begin position="73"/>
        <end position="74"/>
    </location>
</feature>
<feature type="site" description="Cleavage, first; by autolysis" evidence="1">
    <location>
        <begin position="105"/>
        <end position="106"/>
    </location>
</feature>
<feature type="glycosylation site" description="N-linked (GlcNAc...) asparagine" evidence="3">
    <location>
        <position position="385"/>
    </location>
</feature>
<feature type="glycosylation site" description="N-linked (GlcNAc...) asparagine" evidence="3">
    <location>
        <position position="551"/>
    </location>
</feature>
<feature type="disulfide bond" evidence="1">
    <location>
        <begin position="209"/>
        <end position="358"/>
    </location>
</feature>
<feature type="disulfide bond" evidence="1">
    <location>
        <begin position="301"/>
        <end position="331"/>
    </location>
</feature>
<evidence type="ECO:0000250" key="1">
    <source>
        <dbReference type="UniProtKB" id="P09958"/>
    </source>
</evidence>
<evidence type="ECO:0000250" key="2">
    <source>
        <dbReference type="UniProtKB" id="Q28193"/>
    </source>
</evidence>
<evidence type="ECO:0000255" key="3"/>
<evidence type="ECO:0000255" key="4">
    <source>
        <dbReference type="PROSITE-ProRule" id="PRU00293"/>
    </source>
</evidence>
<evidence type="ECO:0000255" key="5">
    <source>
        <dbReference type="PROSITE-ProRule" id="PRU01173"/>
    </source>
</evidence>
<evidence type="ECO:0000255" key="6">
    <source>
        <dbReference type="PROSITE-ProRule" id="PRU01240"/>
    </source>
</evidence>
<evidence type="ECO:0000256" key="7">
    <source>
        <dbReference type="SAM" id="MobiDB-lite"/>
    </source>
</evidence>
<evidence type="ECO:0000269" key="8">
    <source>
    </source>
</evidence>
<evidence type="ECO:0000305" key="9"/>
<sequence>MDLSPSLLLMLWTLLSVLVEEITGQKVYTNTWAAHISGGSAEADRLCKKYGFINHGLIFEDHYHFSHRAVMKRSLTPKRTRQVLLKREPQVHWLEQQVAKKRKKRDIYTDPTDPKFMQQWYLLDTNRHDLHVKEAWEQGFTGKGIVVSILDDGIEKNHPDLQANYDPAASYDVNDQDPDPQPRYTQLNDNRHGTRCAGEVAAVANNGICGVGIAYNANIGGVRMLDGEVTDAVEARSLGLNPNHIHIYSASWGPEDDGKTVDGPAKLAEEAFYRGVTQGRGGLGSIYVWASGNGGREHDSCNCDGYTNSIYTLSISSTTQMGNVPWYSEACSSTLATTYSSGNQNEKQIVTTDLRQKCTDSHTGTSASAPLAAGIIALALEANKNLTWRDMQHLVVQTSNPAGLNANDWITNGVGRKVSHSYGYGLLDAGAMVAMAKTWVTVGPQRKYVIDILSEPKDIGKALEVRRKVEPCAGMSNYISTLEHVQARLSLSYNCRGDLAIYLTSPMGTRSCLLAPRPHDYSADGFNDWSFMTTHSWDEDPAGEWVLEIENVSNNNNYGTLTQFVLVLYGTASEGLSRKFDGDGSRNVASSQSCIVCEEGYFLHQKSCIKSCPQGFTSSIQNIHYTLDNNIEPLLVNVCVPCHVSCATCKGTTINDCLTCPAHSHYNLLDYSCTHQTQRSRESPTLKDSSHDYVARTSNLPFIVAILSCLFIIVVFGSIFLFLQLRSGGVLGRKRLYMLDSGIISYKGIPSGAWQEEGFSESETEETAAHSERTAFLKQQSTL</sequence>
<organism>
    <name type="scientific">Xenopus laevis</name>
    <name type="common">African clawed frog</name>
    <dbReference type="NCBI Taxonomy" id="8355"/>
    <lineage>
        <taxon>Eukaryota</taxon>
        <taxon>Metazoa</taxon>
        <taxon>Chordata</taxon>
        <taxon>Craniata</taxon>
        <taxon>Vertebrata</taxon>
        <taxon>Euteleostomi</taxon>
        <taxon>Amphibia</taxon>
        <taxon>Batrachia</taxon>
        <taxon>Anura</taxon>
        <taxon>Pipoidea</taxon>
        <taxon>Pipidae</taxon>
        <taxon>Xenopodinae</taxon>
        <taxon>Xenopus</taxon>
        <taxon>Xenopus</taxon>
    </lineage>
</organism>
<proteinExistence type="evidence at transcript level"/>
<keyword id="KW-1003">Cell membrane</keyword>
<keyword id="KW-0165">Cleavage on pair of basic residues</keyword>
<keyword id="KW-1015">Disulfide bond</keyword>
<keyword id="KW-0967">Endosome</keyword>
<keyword id="KW-0325">Glycoprotein</keyword>
<keyword id="KW-0333">Golgi apparatus</keyword>
<keyword id="KW-0378">Hydrolase</keyword>
<keyword id="KW-0472">Membrane</keyword>
<keyword id="KW-0479">Metal-binding</keyword>
<keyword id="KW-0645">Protease</keyword>
<keyword id="KW-1185">Reference proteome</keyword>
<keyword id="KW-0677">Repeat</keyword>
<keyword id="KW-0964">Secreted</keyword>
<keyword id="KW-0720">Serine protease</keyword>
<keyword id="KW-0732">Signal</keyword>
<keyword id="KW-0812">Transmembrane</keyword>
<keyword id="KW-1133">Transmembrane helix</keyword>
<keyword id="KW-0865">Zymogen</keyword>